<name>P3H1_STRSQ</name>
<accession>P96010</accession>
<sequence>MRSHILGRIELDQERLGRDLEYLATVPTVEEEYDEFSNGFWKNIPLYNASGGSEDRLYRDLEGSPAQPTKHAEQVPYLNEIITTVYNGERLQMARTRNLKNAVVIPHRDFVELDRELDQYFRTHLMLEDSPLAFHSDDDTVIHMRAGEIWFLDAAAVHSAVNFAEFSRQSLCVDLAFDGAFDEKEAFADATVYAPNLSPDVRERKPFTKEREAGILALSGVIGRENFRDILFLLSKVHYTYDVHPGETFEWLVSVSKGAGDDKMVEKAERIRDFAIGARALGERFSLTTW</sequence>
<reference key="1">
    <citation type="journal article" date="1997" name="J. Bacteriol.">
        <title>Purification and cloning of a proline 3-hydroxylase, a novel enzyme which hydroxylates free L-proline to cis-3-hydroxy-L-proline.</title>
        <authorList>
            <person name="Mori H."/>
            <person name="Shibasaki T."/>
            <person name="Yano K."/>
            <person name="Ozaki A."/>
        </authorList>
    </citation>
    <scope>NUCLEOTIDE SEQUENCE [GENOMIC DNA]</scope>
    <scope>PROTEIN SEQUENCE OF 1-29; 43-67 AND 185-209</scope>
    <scope>FUNCTION</scope>
    <scope>CATALYTIC ACTIVITY</scope>
    <scope>COFACTOR</scope>
    <scope>ACTIVITY REGULATION</scope>
    <scope>SUBSTRATE SPECIFICITY</scope>
    <source>
        <strain>TH1 / FERM BP-4399</strain>
    </source>
</reference>
<reference key="2">
    <citation type="journal article" date="2000" name="Biotechnol. Lett.">
        <title>Cloning of an isozyme of proline 3-hydroxylase and its purification from recombinant Escherichia coli.</title>
        <authorList>
            <person name="Shibasaki T."/>
            <person name="Mori H."/>
            <person name="Ozaki A."/>
        </authorList>
    </citation>
    <scope>FUNCTION</scope>
    <scope>CATALYTIC ACTIVITY</scope>
    <scope>COFACTOR</scope>
    <scope>ACTIVITY REGULATION</scope>
    <scope>BIOPHYSICOCHEMICAL PROPERTIES</scope>
    <scope>SUBSTRATE SPECIFICITY</scope>
    <source>
        <strain>TH1 / FERM BP-4399</strain>
    </source>
</reference>
<evidence type="ECO:0000250" key="1"/>
<evidence type="ECO:0000255" key="2"/>
<evidence type="ECO:0000269" key="3">
    <source>
    </source>
</evidence>
<evidence type="ECO:0000269" key="4">
    <source ref="2"/>
</evidence>
<evidence type="ECO:0000305" key="5"/>
<keyword id="KW-0223">Dioxygenase</keyword>
<keyword id="KW-0903">Direct protein sequencing</keyword>
<keyword id="KW-0408">Iron</keyword>
<keyword id="KW-0479">Metal-binding</keyword>
<keyword id="KW-0560">Oxidoreductase</keyword>
<comment type="function">
    <text evidence="3 4">Dioxygenase that catalyzes the 2-oxoglutarate-dependent selective hydroxylation of free L-proline to cis-3-hydroxy-L-proline (cis-3-Hyp). D-proline, trans-4-hydroxy-L-proline, cis-4-hydroxy-L-proline, cis-4-hydroxy-D-proline, and 3,4-dehydro-DL-proline are not substrates.</text>
</comment>
<comment type="catalytic activity">
    <reaction evidence="3 4">
        <text>L-proline + 2-oxoglutarate + O2 = cis-3-hydroxy-L-proline + succinate + CO2</text>
        <dbReference type="Rhea" id="RHEA:20265"/>
        <dbReference type="ChEBI" id="CHEBI:15379"/>
        <dbReference type="ChEBI" id="CHEBI:16526"/>
        <dbReference type="ChEBI" id="CHEBI:16810"/>
        <dbReference type="ChEBI" id="CHEBI:30031"/>
        <dbReference type="ChEBI" id="CHEBI:60039"/>
        <dbReference type="ChEBI" id="CHEBI:60041"/>
        <dbReference type="EC" id="1.14.11.28"/>
    </reaction>
</comment>
<comment type="cofactor">
    <cofactor evidence="3 4">
        <name>Fe(2+)</name>
        <dbReference type="ChEBI" id="CHEBI:29033"/>
    </cofactor>
    <text evidence="3 4">Binds 1 Fe(2+) ion.</text>
</comment>
<comment type="activity regulation">
    <text evidence="3 4">Inhibited by metal ions such as Co(2+), Zn(2+), Ni(2+) or Cu(2+). Is also inhibited by EDTA in vitro. Unlike the procollagen-proline cis-3- and trans-4-hydroxylases from mammals, does not necessarily require L-ascorbate for activity although it does increase the activity of the enzyme.</text>
</comment>
<comment type="biophysicochemical properties">
    <kinetics>
        <KM evidence="4">0.2 mM for L-proline</KM>
        <KM evidence="4">0.083 mM for 2-oxoglutarate</KM>
        <text>Comparison of both proline 3-hydroxylase isozymes shows that type II enzyme has 1.8-fold higher activity than type I upon L-proline, and 24-fold higher activity upon L-2-azetidinecarboxylic acid.</text>
    </kinetics>
    <phDependence>
        <text evidence="4">Optimum pH is 6.0. Is stable from pH 5.5 to 8.5.</text>
    </phDependence>
    <temperatureDependence>
        <text evidence="4">Optimum temperature is 35 degrees Celsius. Is stable below 30 degrees Celsius.</text>
    </temperatureDependence>
</comment>
<comment type="subunit">
    <text evidence="1">Homodimer.</text>
</comment>
<comment type="similarity">
    <text evidence="5">Belongs to the L-proline cis-4-/cis-3-hydroxylase family.</text>
</comment>
<protein>
    <recommendedName>
        <fullName>L-proline cis-3-hydroxylase 1</fullName>
        <shortName>P3H 1</shortName>
        <ecNumber>1.14.11.28</ecNumber>
    </recommendedName>
    <alternativeName>
        <fullName>Proline 3-hydroxylase 1</fullName>
    </alternativeName>
    <alternativeName>
        <fullName>Proline 3-hydroxylase type I</fullName>
    </alternativeName>
</protein>
<feature type="chain" id="PRO_0000393426" description="L-proline cis-3-hydroxylase 1">
    <location>
        <begin position="1"/>
        <end position="290"/>
    </location>
</feature>
<feature type="binding site" evidence="1">
    <location>
        <position position="107"/>
    </location>
    <ligand>
        <name>Fe cation</name>
        <dbReference type="ChEBI" id="CHEBI:24875"/>
    </ligand>
</feature>
<feature type="binding site" evidence="1">
    <location>
        <position position="109"/>
    </location>
    <ligand>
        <name>Fe cation</name>
        <dbReference type="ChEBI" id="CHEBI:24875"/>
    </ligand>
</feature>
<feature type="binding site" evidence="1">
    <location>
        <position position="158"/>
    </location>
    <ligand>
        <name>Fe cation</name>
        <dbReference type="ChEBI" id="CHEBI:24875"/>
    </ligand>
</feature>
<feature type="binding site" evidence="2">
    <location>
        <position position="168"/>
    </location>
    <ligand>
        <name>2-oxoglutarate</name>
        <dbReference type="ChEBI" id="CHEBI:16810"/>
    </ligand>
</feature>
<organism>
    <name type="scientific">Streptomyces sp</name>
    <dbReference type="NCBI Taxonomy" id="1931"/>
    <lineage>
        <taxon>Bacteria</taxon>
        <taxon>Bacillati</taxon>
        <taxon>Actinomycetota</taxon>
        <taxon>Actinomycetes</taxon>
        <taxon>Kitasatosporales</taxon>
        <taxon>Streptomycetaceae</taxon>
        <taxon>Streptomyces</taxon>
    </lineage>
</organism>
<proteinExistence type="evidence at protein level"/>
<dbReference type="EC" id="1.14.11.28"/>
<dbReference type="EMBL" id="AB007189">
    <property type="protein sequence ID" value="BAA22406.1"/>
    <property type="molecule type" value="Genomic_DNA"/>
</dbReference>
<dbReference type="SMR" id="P96010"/>
<dbReference type="KEGG" id="ag:BAA22406"/>
<dbReference type="GO" id="GO:0046872">
    <property type="term" value="F:metal ion binding"/>
    <property type="evidence" value="ECO:0007669"/>
    <property type="project" value="UniProtKB-KW"/>
</dbReference>
<dbReference type="GO" id="GO:0033763">
    <property type="term" value="F:proline 3-hydroxylase activity"/>
    <property type="evidence" value="ECO:0007669"/>
    <property type="project" value="UniProtKB-EC"/>
</dbReference>
<dbReference type="Gene3D" id="2.60.120.330">
    <property type="entry name" value="B-lactam Antibiotic, Isopenicillin N Synthase, Chain"/>
    <property type="match status" value="1"/>
</dbReference>
<dbReference type="Gene3D" id="1.10.1720.10">
    <property type="entry name" value="L-proline 3-hydroxylase, C-terminal domain"/>
    <property type="match status" value="1"/>
</dbReference>
<dbReference type="InterPro" id="IPR007803">
    <property type="entry name" value="Asp/Arg/Pro-Hydrxlase"/>
</dbReference>
<dbReference type="InterPro" id="IPR027443">
    <property type="entry name" value="IPNS-like_sf"/>
</dbReference>
<dbReference type="InterPro" id="IPR008035">
    <property type="entry name" value="Pro_3_hydrox_C"/>
</dbReference>
<dbReference type="InterPro" id="IPR037037">
    <property type="entry name" value="Pro_3_hydrox_C_sf"/>
</dbReference>
<dbReference type="Pfam" id="PF05118">
    <property type="entry name" value="Asp_Arg_Hydrox"/>
    <property type="match status" value="1"/>
</dbReference>
<dbReference type="Pfam" id="PF05373">
    <property type="entry name" value="Pro_3_hydrox_C"/>
    <property type="match status" value="1"/>
</dbReference>
<dbReference type="SUPFAM" id="SSF51197">
    <property type="entry name" value="Clavaminate synthase-like"/>
    <property type="match status" value="1"/>
</dbReference>